<keyword id="KW-0240">DNA-directed RNA polymerase</keyword>
<keyword id="KW-0548">Nucleotidyltransferase</keyword>
<keyword id="KW-0804">Transcription</keyword>
<keyword id="KW-0808">Transferase</keyword>
<protein>
    <recommendedName>
        <fullName evidence="1">DNA-directed RNA polymerase subunit alpha</fullName>
        <shortName evidence="1">RNAP subunit alpha</shortName>
        <ecNumber evidence="1">2.7.7.6</ecNumber>
    </recommendedName>
    <alternativeName>
        <fullName evidence="1">RNA polymerase subunit alpha</fullName>
    </alternativeName>
    <alternativeName>
        <fullName evidence="1">Transcriptase subunit alpha</fullName>
    </alternativeName>
</protein>
<sequence length="312" mass="34180">MIEFEKPKITKFDESENYGKFVVEPLERGYGTTLGNSLRRVLLSSLPGAAVTSIQIEGVQHEFATIPGVREDVIQIVLAVKGIAIKSYVESEKQIELDVTGPMDVTAGDILTDSDIEIVNKDHYLFSIAEGHSMRAVMTVKKGYGYVPADENKVDGAPIGTIAVDSIYTPVSKVNYQVEPARVGGDSSYDKLTLEITTNGTIVSDEALSLSAKILTDHLNLFVDLSEVAAEAETLVVKDEVKTERVLDKIIEEMDFSVRTYNGLKRAGINTVADIVEMSEADMIKVKNLGHKSVEEVKVKLTELGLSLKKRK</sequence>
<evidence type="ECO:0000255" key="1">
    <source>
        <dbReference type="HAMAP-Rule" id="MF_00059"/>
    </source>
</evidence>
<organism>
    <name type="scientific">Lactococcus lactis subsp. cremoris (strain MG1363)</name>
    <dbReference type="NCBI Taxonomy" id="416870"/>
    <lineage>
        <taxon>Bacteria</taxon>
        <taxon>Bacillati</taxon>
        <taxon>Bacillota</taxon>
        <taxon>Bacilli</taxon>
        <taxon>Lactobacillales</taxon>
        <taxon>Streptococcaceae</taxon>
        <taxon>Lactococcus</taxon>
        <taxon>Lactococcus cremoris subsp. cremoris</taxon>
    </lineage>
</organism>
<reference key="1">
    <citation type="journal article" date="2007" name="J. Bacteriol.">
        <title>The complete genome sequence of the lactic acid bacterial paradigm Lactococcus lactis subsp. cremoris MG1363.</title>
        <authorList>
            <person name="Wegmann U."/>
            <person name="O'Connell-Motherway M."/>
            <person name="Zomer A."/>
            <person name="Buist G."/>
            <person name="Shearman C."/>
            <person name="Canchaya C."/>
            <person name="Ventura M."/>
            <person name="Goesmann A."/>
            <person name="Gasson M.J."/>
            <person name="Kuipers O.P."/>
            <person name="van Sinderen D."/>
            <person name="Kok J."/>
        </authorList>
    </citation>
    <scope>NUCLEOTIDE SEQUENCE [LARGE SCALE GENOMIC DNA]</scope>
    <source>
        <strain>MG1363</strain>
    </source>
</reference>
<name>RPOA_LACLM</name>
<proteinExistence type="inferred from homology"/>
<comment type="function">
    <text evidence="1">DNA-dependent RNA polymerase catalyzes the transcription of DNA into RNA using the four ribonucleoside triphosphates as substrates.</text>
</comment>
<comment type="catalytic activity">
    <reaction evidence="1">
        <text>RNA(n) + a ribonucleoside 5'-triphosphate = RNA(n+1) + diphosphate</text>
        <dbReference type="Rhea" id="RHEA:21248"/>
        <dbReference type="Rhea" id="RHEA-COMP:14527"/>
        <dbReference type="Rhea" id="RHEA-COMP:17342"/>
        <dbReference type="ChEBI" id="CHEBI:33019"/>
        <dbReference type="ChEBI" id="CHEBI:61557"/>
        <dbReference type="ChEBI" id="CHEBI:140395"/>
        <dbReference type="EC" id="2.7.7.6"/>
    </reaction>
</comment>
<comment type="subunit">
    <text evidence="1">Homodimer. The RNAP catalytic core consists of 2 alpha, 1 beta, 1 beta' and 1 omega subunit. When a sigma factor is associated with the core the holoenzyme is formed, which can initiate transcription.</text>
</comment>
<comment type="domain">
    <text evidence="1">The N-terminal domain is essential for RNAP assembly and basal transcription, whereas the C-terminal domain is involved in interaction with transcriptional regulators and with upstream promoter elements.</text>
</comment>
<comment type="similarity">
    <text evidence="1">Belongs to the RNA polymerase alpha chain family.</text>
</comment>
<dbReference type="EC" id="2.7.7.6" evidence="1"/>
<dbReference type="EMBL" id="AM406671">
    <property type="protein sequence ID" value="CAL98918.1"/>
    <property type="molecule type" value="Genomic_DNA"/>
</dbReference>
<dbReference type="RefSeq" id="WP_011836020.1">
    <property type="nucleotide sequence ID" value="NC_009004.1"/>
</dbReference>
<dbReference type="SMR" id="A2RNM7"/>
<dbReference type="STRING" id="416870.llmg_2354"/>
<dbReference type="KEGG" id="llm:llmg_2354"/>
<dbReference type="eggNOG" id="COG0202">
    <property type="taxonomic scope" value="Bacteria"/>
</dbReference>
<dbReference type="HOGENOM" id="CLU_053084_0_1_9"/>
<dbReference type="OrthoDB" id="9805706at2"/>
<dbReference type="PhylomeDB" id="A2RNM7"/>
<dbReference type="Proteomes" id="UP000000364">
    <property type="component" value="Chromosome"/>
</dbReference>
<dbReference type="GO" id="GO:0005737">
    <property type="term" value="C:cytoplasm"/>
    <property type="evidence" value="ECO:0007669"/>
    <property type="project" value="UniProtKB-ARBA"/>
</dbReference>
<dbReference type="GO" id="GO:0000428">
    <property type="term" value="C:DNA-directed RNA polymerase complex"/>
    <property type="evidence" value="ECO:0007669"/>
    <property type="project" value="UniProtKB-KW"/>
</dbReference>
<dbReference type="GO" id="GO:0003677">
    <property type="term" value="F:DNA binding"/>
    <property type="evidence" value="ECO:0007669"/>
    <property type="project" value="UniProtKB-UniRule"/>
</dbReference>
<dbReference type="GO" id="GO:0003899">
    <property type="term" value="F:DNA-directed RNA polymerase activity"/>
    <property type="evidence" value="ECO:0007669"/>
    <property type="project" value="UniProtKB-UniRule"/>
</dbReference>
<dbReference type="GO" id="GO:0046983">
    <property type="term" value="F:protein dimerization activity"/>
    <property type="evidence" value="ECO:0007669"/>
    <property type="project" value="InterPro"/>
</dbReference>
<dbReference type="GO" id="GO:0006351">
    <property type="term" value="P:DNA-templated transcription"/>
    <property type="evidence" value="ECO:0007669"/>
    <property type="project" value="UniProtKB-UniRule"/>
</dbReference>
<dbReference type="CDD" id="cd06928">
    <property type="entry name" value="RNAP_alpha_NTD"/>
    <property type="match status" value="1"/>
</dbReference>
<dbReference type="FunFam" id="2.170.120.12:FF:000001">
    <property type="entry name" value="DNA-directed RNA polymerase subunit alpha"/>
    <property type="match status" value="1"/>
</dbReference>
<dbReference type="Gene3D" id="1.10.150.20">
    <property type="entry name" value="5' to 3' exonuclease, C-terminal subdomain"/>
    <property type="match status" value="1"/>
</dbReference>
<dbReference type="Gene3D" id="2.170.120.12">
    <property type="entry name" value="DNA-directed RNA polymerase, insert domain"/>
    <property type="match status" value="1"/>
</dbReference>
<dbReference type="Gene3D" id="3.30.1360.10">
    <property type="entry name" value="RNA polymerase, RBP11-like subunit"/>
    <property type="match status" value="1"/>
</dbReference>
<dbReference type="HAMAP" id="MF_00059">
    <property type="entry name" value="RNApol_bact_RpoA"/>
    <property type="match status" value="1"/>
</dbReference>
<dbReference type="InterPro" id="IPR011262">
    <property type="entry name" value="DNA-dir_RNA_pol_insert"/>
</dbReference>
<dbReference type="InterPro" id="IPR011263">
    <property type="entry name" value="DNA-dir_RNA_pol_RpoA/D/Rpb3"/>
</dbReference>
<dbReference type="InterPro" id="IPR011773">
    <property type="entry name" value="DNA-dir_RpoA"/>
</dbReference>
<dbReference type="InterPro" id="IPR036603">
    <property type="entry name" value="RBP11-like"/>
</dbReference>
<dbReference type="InterPro" id="IPR011260">
    <property type="entry name" value="RNAP_asu_C"/>
</dbReference>
<dbReference type="InterPro" id="IPR036643">
    <property type="entry name" value="RNApol_insert_sf"/>
</dbReference>
<dbReference type="NCBIfam" id="NF003513">
    <property type="entry name" value="PRK05182.1-2"/>
    <property type="match status" value="1"/>
</dbReference>
<dbReference type="NCBIfam" id="NF003515">
    <property type="entry name" value="PRK05182.2-1"/>
    <property type="match status" value="1"/>
</dbReference>
<dbReference type="NCBIfam" id="NF003518">
    <property type="entry name" value="PRK05182.2-4"/>
    <property type="match status" value="1"/>
</dbReference>
<dbReference type="NCBIfam" id="NF003519">
    <property type="entry name" value="PRK05182.2-5"/>
    <property type="match status" value="1"/>
</dbReference>
<dbReference type="NCBIfam" id="TIGR02027">
    <property type="entry name" value="rpoA"/>
    <property type="match status" value="1"/>
</dbReference>
<dbReference type="Pfam" id="PF01000">
    <property type="entry name" value="RNA_pol_A_bac"/>
    <property type="match status" value="1"/>
</dbReference>
<dbReference type="Pfam" id="PF03118">
    <property type="entry name" value="RNA_pol_A_CTD"/>
    <property type="match status" value="1"/>
</dbReference>
<dbReference type="Pfam" id="PF01193">
    <property type="entry name" value="RNA_pol_L"/>
    <property type="match status" value="1"/>
</dbReference>
<dbReference type="SMART" id="SM00662">
    <property type="entry name" value="RPOLD"/>
    <property type="match status" value="1"/>
</dbReference>
<dbReference type="SUPFAM" id="SSF47789">
    <property type="entry name" value="C-terminal domain of RNA polymerase alpha subunit"/>
    <property type="match status" value="1"/>
</dbReference>
<dbReference type="SUPFAM" id="SSF56553">
    <property type="entry name" value="Insert subdomain of RNA polymerase alpha subunit"/>
    <property type="match status" value="1"/>
</dbReference>
<dbReference type="SUPFAM" id="SSF55257">
    <property type="entry name" value="RBP11-like subunits of RNA polymerase"/>
    <property type="match status" value="1"/>
</dbReference>
<gene>
    <name evidence="1" type="primary">rpoA</name>
    <name type="ordered locus">llmg_2354</name>
</gene>
<feature type="chain" id="PRO_0000296824" description="DNA-directed RNA polymerase subunit alpha">
    <location>
        <begin position="1"/>
        <end position="312"/>
    </location>
</feature>
<feature type="region of interest" description="Alpha N-terminal domain (alpha-NTD)" evidence="1">
    <location>
        <begin position="1"/>
        <end position="226"/>
    </location>
</feature>
<feature type="region of interest" description="Alpha C-terminal domain (alpha-CTD)" evidence="1">
    <location>
        <begin position="243"/>
        <end position="312"/>
    </location>
</feature>
<accession>A2RNM7</accession>